<feature type="chain" id="PRO_1000187980" description="Ribonuclease BN">
    <location>
        <begin position="1"/>
        <end position="305"/>
    </location>
</feature>
<feature type="active site" description="Proton acceptor" evidence="1">
    <location>
        <position position="68"/>
    </location>
</feature>
<feature type="binding site" evidence="1">
    <location>
        <position position="64"/>
    </location>
    <ligand>
        <name>Zn(2+)</name>
        <dbReference type="ChEBI" id="CHEBI:29105"/>
        <label>1</label>
        <note>catalytic</note>
    </ligand>
</feature>
<feature type="binding site" evidence="1">
    <location>
        <position position="66"/>
    </location>
    <ligand>
        <name>Zn(2+)</name>
        <dbReference type="ChEBI" id="CHEBI:29105"/>
        <label>1</label>
        <note>catalytic</note>
    </ligand>
</feature>
<feature type="binding site" evidence="1">
    <location>
        <position position="68"/>
    </location>
    <ligand>
        <name>Zn(2+)</name>
        <dbReference type="ChEBI" id="CHEBI:29105"/>
        <label>2</label>
        <note>catalytic</note>
    </ligand>
</feature>
<feature type="binding site" evidence="1">
    <location>
        <position position="69"/>
    </location>
    <ligand>
        <name>Zn(2+)</name>
        <dbReference type="ChEBI" id="CHEBI:29105"/>
        <label>2</label>
        <note>catalytic</note>
    </ligand>
</feature>
<feature type="binding site" evidence="1">
    <location>
        <position position="141"/>
    </location>
    <ligand>
        <name>Zn(2+)</name>
        <dbReference type="ChEBI" id="CHEBI:29105"/>
        <label>1</label>
        <note>catalytic</note>
    </ligand>
</feature>
<feature type="binding site" evidence="1">
    <location>
        <position position="212"/>
    </location>
    <ligand>
        <name>Zn(2+)</name>
        <dbReference type="ChEBI" id="CHEBI:29105"/>
        <label>1</label>
        <note>catalytic</note>
    </ligand>
</feature>
<feature type="binding site" evidence="1">
    <location>
        <position position="212"/>
    </location>
    <ligand>
        <name>Zn(2+)</name>
        <dbReference type="ChEBI" id="CHEBI:29105"/>
        <label>2</label>
        <note>catalytic</note>
    </ligand>
</feature>
<feature type="binding site" evidence="1">
    <location>
        <position position="270"/>
    </location>
    <ligand>
        <name>Zn(2+)</name>
        <dbReference type="ChEBI" id="CHEBI:29105"/>
        <label>2</label>
        <note>catalytic</note>
    </ligand>
</feature>
<gene>
    <name evidence="1" type="primary">rbn</name>
    <name type="synonym">rnz</name>
    <name type="ordered locus">SeAg_B2449</name>
</gene>
<dbReference type="EC" id="3.1.-.-" evidence="1"/>
<dbReference type="EMBL" id="CP001138">
    <property type="protein sequence ID" value="ACH50431.1"/>
    <property type="molecule type" value="Genomic_DNA"/>
</dbReference>
<dbReference type="RefSeq" id="WP_000419093.1">
    <property type="nucleotide sequence ID" value="NC_011149.1"/>
</dbReference>
<dbReference type="SMR" id="B5EZJ2"/>
<dbReference type="KEGG" id="sea:SeAg_B2449"/>
<dbReference type="HOGENOM" id="CLU_031317_2_0_6"/>
<dbReference type="Proteomes" id="UP000008819">
    <property type="component" value="Chromosome"/>
</dbReference>
<dbReference type="GO" id="GO:0042781">
    <property type="term" value="F:3'-tRNA processing endoribonuclease activity"/>
    <property type="evidence" value="ECO:0007669"/>
    <property type="project" value="TreeGrafter"/>
</dbReference>
<dbReference type="GO" id="GO:0004527">
    <property type="term" value="F:exonuclease activity"/>
    <property type="evidence" value="ECO:0007669"/>
    <property type="project" value="UniProtKB-UniRule"/>
</dbReference>
<dbReference type="GO" id="GO:0008270">
    <property type="term" value="F:zinc ion binding"/>
    <property type="evidence" value="ECO:0007669"/>
    <property type="project" value="UniProtKB-UniRule"/>
</dbReference>
<dbReference type="CDD" id="cd07717">
    <property type="entry name" value="RNaseZ_ZiPD-like_MBL-fold"/>
    <property type="match status" value="1"/>
</dbReference>
<dbReference type="FunFam" id="3.60.15.10:FF:000002">
    <property type="entry name" value="Ribonuclease Z"/>
    <property type="match status" value="1"/>
</dbReference>
<dbReference type="Gene3D" id="3.60.15.10">
    <property type="entry name" value="Ribonuclease Z/Hydroxyacylglutathione hydrolase-like"/>
    <property type="match status" value="1"/>
</dbReference>
<dbReference type="HAMAP" id="MF_01818">
    <property type="entry name" value="RNase_Z_BN"/>
    <property type="match status" value="1"/>
</dbReference>
<dbReference type="InterPro" id="IPR001279">
    <property type="entry name" value="Metallo-B-lactamas"/>
</dbReference>
<dbReference type="InterPro" id="IPR036866">
    <property type="entry name" value="RibonucZ/Hydroxyglut_hydro"/>
</dbReference>
<dbReference type="InterPro" id="IPR013469">
    <property type="entry name" value="Rnase_BN"/>
</dbReference>
<dbReference type="InterPro" id="IPR013471">
    <property type="entry name" value="RNase_Z/BN"/>
</dbReference>
<dbReference type="NCBIfam" id="NF000800">
    <property type="entry name" value="PRK00055.1-1"/>
    <property type="match status" value="1"/>
</dbReference>
<dbReference type="NCBIfam" id="NF000801">
    <property type="entry name" value="PRK00055.1-3"/>
    <property type="match status" value="1"/>
</dbReference>
<dbReference type="NCBIfam" id="TIGR02651">
    <property type="entry name" value="RNase_Z"/>
    <property type="match status" value="1"/>
</dbReference>
<dbReference type="NCBIfam" id="TIGR02649">
    <property type="entry name" value="true_RNase_BN"/>
    <property type="match status" value="1"/>
</dbReference>
<dbReference type="PANTHER" id="PTHR46018">
    <property type="entry name" value="ZINC PHOSPHODIESTERASE ELAC PROTEIN 1"/>
    <property type="match status" value="1"/>
</dbReference>
<dbReference type="PANTHER" id="PTHR46018:SF2">
    <property type="entry name" value="ZINC PHOSPHODIESTERASE ELAC PROTEIN 1"/>
    <property type="match status" value="1"/>
</dbReference>
<dbReference type="Pfam" id="PF12706">
    <property type="entry name" value="Lactamase_B_2"/>
    <property type="match status" value="2"/>
</dbReference>
<dbReference type="SUPFAM" id="SSF56281">
    <property type="entry name" value="Metallo-hydrolase/oxidoreductase"/>
    <property type="match status" value="1"/>
</dbReference>
<protein>
    <recommendedName>
        <fullName evidence="1">Ribonuclease BN</fullName>
        <shortName evidence="1">RNase BN</shortName>
        <ecNumber evidence="1">3.1.-.-</ecNumber>
    </recommendedName>
    <alternativeName>
        <fullName evidence="1">Ribonuclease Z homolog</fullName>
        <shortName evidence="1">RNase Z homolog</shortName>
    </alternativeName>
</protein>
<reference key="1">
    <citation type="journal article" date="2011" name="J. Bacteriol.">
        <title>Comparative genomics of 28 Salmonella enterica isolates: evidence for CRISPR-mediated adaptive sublineage evolution.</title>
        <authorList>
            <person name="Fricke W.F."/>
            <person name="Mammel M.K."/>
            <person name="McDermott P.F."/>
            <person name="Tartera C."/>
            <person name="White D.G."/>
            <person name="Leclerc J.E."/>
            <person name="Ravel J."/>
            <person name="Cebula T.A."/>
        </authorList>
    </citation>
    <scope>NUCLEOTIDE SEQUENCE [LARGE SCALE GENOMIC DNA]</scope>
    <source>
        <strain>SL483</strain>
    </source>
</reference>
<name>RBN_SALA4</name>
<comment type="function">
    <text evidence="1">Zinc phosphodiesterase, which has both exoribonuclease and endoribonuclease activities.</text>
</comment>
<comment type="cofactor">
    <cofactor evidence="1">
        <name>Zn(2+)</name>
        <dbReference type="ChEBI" id="CHEBI:29105"/>
    </cofactor>
    <text evidence="1">Binds 2 Zn(2+) ions.</text>
</comment>
<comment type="subunit">
    <text evidence="1">Homodimer.</text>
</comment>
<comment type="similarity">
    <text evidence="1">Belongs to the RNase Z family. RNase BN subfamily.</text>
</comment>
<keyword id="KW-0255">Endonuclease</keyword>
<keyword id="KW-0269">Exonuclease</keyword>
<keyword id="KW-0378">Hydrolase</keyword>
<keyword id="KW-0479">Metal-binding</keyword>
<keyword id="KW-0540">Nuclease</keyword>
<keyword id="KW-0819">tRNA processing</keyword>
<keyword id="KW-0862">Zinc</keyword>
<proteinExistence type="inferred from homology"/>
<sequence>MELIFLGTSAGVPTRSRNVTAILLHLQHPTQPGVWLFDCGEGTQHQMLNTAFHPGKLERIFISHLHGDHLFGLPGLLCSRSMAGNPHPLTVYGPQGVREFIATTLRLSGSWTDFPLQIEEISAGDILDDGLRKVTAFRLEHPLECYGYRVVEHDKPGALNARALKAAGVTPGPLFQALKAGKTVTLADGRQINGADYLAPAVAGKSVAIFGDTAPCEAALALAQGVDVMVHETTLDASMEEKANARGHSSTRQTATLAREAAVGRLIMTHISSRYDDKGCQRLLAECRAIFPATELAYDFSVFPV</sequence>
<evidence type="ECO:0000255" key="1">
    <source>
        <dbReference type="HAMAP-Rule" id="MF_01818"/>
    </source>
</evidence>
<organism>
    <name type="scientific">Salmonella agona (strain SL483)</name>
    <dbReference type="NCBI Taxonomy" id="454166"/>
    <lineage>
        <taxon>Bacteria</taxon>
        <taxon>Pseudomonadati</taxon>
        <taxon>Pseudomonadota</taxon>
        <taxon>Gammaproteobacteria</taxon>
        <taxon>Enterobacterales</taxon>
        <taxon>Enterobacteriaceae</taxon>
        <taxon>Salmonella</taxon>
    </lineage>
</organism>
<accession>B5EZJ2</accession>